<organism>
    <name type="scientific">Mus musculus</name>
    <name type="common">Mouse</name>
    <dbReference type="NCBI Taxonomy" id="10090"/>
    <lineage>
        <taxon>Eukaryota</taxon>
        <taxon>Metazoa</taxon>
        <taxon>Chordata</taxon>
        <taxon>Craniata</taxon>
        <taxon>Vertebrata</taxon>
        <taxon>Euteleostomi</taxon>
        <taxon>Mammalia</taxon>
        <taxon>Eutheria</taxon>
        <taxon>Euarchontoglires</taxon>
        <taxon>Glires</taxon>
        <taxon>Rodentia</taxon>
        <taxon>Myomorpha</taxon>
        <taxon>Muroidea</taxon>
        <taxon>Muridae</taxon>
        <taxon>Murinae</taxon>
        <taxon>Mus</taxon>
        <taxon>Mus</taxon>
    </lineage>
</organism>
<name>DYH8_MOUSE</name>
<gene>
    <name type="primary">Dnah8</name>
    <name type="synonym">Dnahc8</name>
</gene>
<reference key="1">
    <citation type="journal article" date="2002" name="Dev. Biol.">
        <title>The T complex distorter 2 candidate gene, Dnahc8, encodes at least two testis-specific axonemal dynein heavy chains that differ extensively at their amino and carboxyl termini.</title>
        <authorList>
            <person name="Samant S.A."/>
            <person name="Ogunkua O."/>
            <person name="Hui L."/>
            <person name="Fossella J."/>
            <person name="Pilder S.H."/>
        </authorList>
    </citation>
    <scope>NUCLEOTIDE SEQUENCE [GENOMIC DNA / MRNA] (ISOFORMS 1 AND 2)</scope>
    <scope>FUNCTION</scope>
    <scope>TISSUE SPECIFICITY</scope>
    <source>
        <strain>129/Sv</strain>
        <strain>129S1/SvImJ</strain>
        <tissue>Testis</tissue>
    </source>
</reference>
<reference key="2">
    <citation type="journal article" date="2009" name="PLoS Biol.">
        <title>Lineage-specific biology revealed by a finished genome assembly of the mouse.</title>
        <authorList>
            <person name="Church D.M."/>
            <person name="Goodstadt L."/>
            <person name="Hillier L.W."/>
            <person name="Zody M.C."/>
            <person name="Goldstein S."/>
            <person name="She X."/>
            <person name="Bult C.J."/>
            <person name="Agarwala R."/>
            <person name="Cherry J.L."/>
            <person name="DiCuccio M."/>
            <person name="Hlavina W."/>
            <person name="Kapustin Y."/>
            <person name="Meric P."/>
            <person name="Maglott D."/>
            <person name="Birtle Z."/>
            <person name="Marques A.C."/>
            <person name="Graves T."/>
            <person name="Zhou S."/>
            <person name="Teague B."/>
            <person name="Potamousis K."/>
            <person name="Churas C."/>
            <person name="Place M."/>
            <person name="Herschleb J."/>
            <person name="Runnheim R."/>
            <person name="Forrest D."/>
            <person name="Amos-Landgraf J."/>
            <person name="Schwartz D.C."/>
            <person name="Cheng Z."/>
            <person name="Lindblad-Toh K."/>
            <person name="Eichler E.E."/>
            <person name="Ponting C.P."/>
        </authorList>
    </citation>
    <scope>NUCLEOTIDE SEQUENCE [LARGE SCALE GENOMIC DNA]</scope>
    <source>
        <strain>C57BL/6J</strain>
    </source>
</reference>
<reference key="3">
    <citation type="journal article" date="2000" name="Mamm. Genome">
        <title>An axonemal dynein at the hybrid sterility 6 locus: implications for t haplotype-specific male sterility and the evolution of species barriers.</title>
        <authorList>
            <person name="Fossella J."/>
            <person name="Samant S.A."/>
            <person name="Silver L.M."/>
            <person name="King S.M."/>
            <person name="Vaughan K.T."/>
            <person name="Olds-Clarke P."/>
            <person name="Johnson K.A."/>
            <person name="Mikami A."/>
            <person name="Vallee R.B."/>
            <person name="Pilder S.H."/>
        </authorList>
    </citation>
    <scope>NUCLEOTIDE SEQUENCE [MRNA] OF 490-582</scope>
    <scope>FUNCTION</scope>
    <scope>TISSUE SPECIFICITY</scope>
    <source>
        <strain>C57BL/6J</strain>
        <tissue>Testis</tissue>
    </source>
</reference>
<reference key="4">
    <citation type="journal article" date="1997" name="Gene">
        <title>Identification of dynein heavy chain genes expressed in human and mouse testis: chromosomal localization of an axonemal dynein gene.</title>
        <authorList>
            <person name="Neesen J."/>
            <person name="Koehler M.R."/>
            <person name="Kirschner R."/>
            <person name="Steinlein C."/>
            <person name="Kreutzberger J."/>
            <person name="Engel W."/>
            <person name="Schmid M."/>
        </authorList>
    </citation>
    <scope>NUCLEOTIDE SEQUENCE [MRNA] OF 2060-2264</scope>
    <source>
        <strain>NMRI</strain>
        <tissue>Testis</tissue>
    </source>
</reference>
<reference key="5">
    <citation type="journal article" date="2005" name="Science">
        <title>The transcriptional landscape of the mammalian genome.</title>
        <authorList>
            <person name="Carninci P."/>
            <person name="Kasukawa T."/>
            <person name="Katayama S."/>
            <person name="Gough J."/>
            <person name="Frith M.C."/>
            <person name="Maeda N."/>
            <person name="Oyama R."/>
            <person name="Ravasi T."/>
            <person name="Lenhard B."/>
            <person name="Wells C."/>
            <person name="Kodzius R."/>
            <person name="Shimokawa K."/>
            <person name="Bajic V.B."/>
            <person name="Brenner S.E."/>
            <person name="Batalov S."/>
            <person name="Forrest A.R."/>
            <person name="Zavolan M."/>
            <person name="Davis M.J."/>
            <person name="Wilming L.G."/>
            <person name="Aidinis V."/>
            <person name="Allen J.E."/>
            <person name="Ambesi-Impiombato A."/>
            <person name="Apweiler R."/>
            <person name="Aturaliya R.N."/>
            <person name="Bailey T.L."/>
            <person name="Bansal M."/>
            <person name="Baxter L."/>
            <person name="Beisel K.W."/>
            <person name="Bersano T."/>
            <person name="Bono H."/>
            <person name="Chalk A.M."/>
            <person name="Chiu K.P."/>
            <person name="Choudhary V."/>
            <person name="Christoffels A."/>
            <person name="Clutterbuck D.R."/>
            <person name="Crowe M.L."/>
            <person name="Dalla E."/>
            <person name="Dalrymple B.P."/>
            <person name="de Bono B."/>
            <person name="Della Gatta G."/>
            <person name="di Bernardo D."/>
            <person name="Down T."/>
            <person name="Engstrom P."/>
            <person name="Fagiolini M."/>
            <person name="Faulkner G."/>
            <person name="Fletcher C.F."/>
            <person name="Fukushima T."/>
            <person name="Furuno M."/>
            <person name="Futaki S."/>
            <person name="Gariboldi M."/>
            <person name="Georgii-Hemming P."/>
            <person name="Gingeras T.R."/>
            <person name="Gojobori T."/>
            <person name="Green R.E."/>
            <person name="Gustincich S."/>
            <person name="Harbers M."/>
            <person name="Hayashi Y."/>
            <person name="Hensch T.K."/>
            <person name="Hirokawa N."/>
            <person name="Hill D."/>
            <person name="Huminiecki L."/>
            <person name="Iacono M."/>
            <person name="Ikeo K."/>
            <person name="Iwama A."/>
            <person name="Ishikawa T."/>
            <person name="Jakt M."/>
            <person name="Kanapin A."/>
            <person name="Katoh M."/>
            <person name="Kawasawa Y."/>
            <person name="Kelso J."/>
            <person name="Kitamura H."/>
            <person name="Kitano H."/>
            <person name="Kollias G."/>
            <person name="Krishnan S.P."/>
            <person name="Kruger A."/>
            <person name="Kummerfeld S.K."/>
            <person name="Kurochkin I.V."/>
            <person name="Lareau L.F."/>
            <person name="Lazarevic D."/>
            <person name="Lipovich L."/>
            <person name="Liu J."/>
            <person name="Liuni S."/>
            <person name="McWilliam S."/>
            <person name="Madan Babu M."/>
            <person name="Madera M."/>
            <person name="Marchionni L."/>
            <person name="Matsuda H."/>
            <person name="Matsuzawa S."/>
            <person name="Miki H."/>
            <person name="Mignone F."/>
            <person name="Miyake S."/>
            <person name="Morris K."/>
            <person name="Mottagui-Tabar S."/>
            <person name="Mulder N."/>
            <person name="Nakano N."/>
            <person name="Nakauchi H."/>
            <person name="Ng P."/>
            <person name="Nilsson R."/>
            <person name="Nishiguchi S."/>
            <person name="Nishikawa S."/>
            <person name="Nori F."/>
            <person name="Ohara O."/>
            <person name="Okazaki Y."/>
            <person name="Orlando V."/>
            <person name="Pang K.C."/>
            <person name="Pavan W.J."/>
            <person name="Pavesi G."/>
            <person name="Pesole G."/>
            <person name="Petrovsky N."/>
            <person name="Piazza S."/>
            <person name="Reed J."/>
            <person name="Reid J.F."/>
            <person name="Ring B.Z."/>
            <person name="Ringwald M."/>
            <person name="Rost B."/>
            <person name="Ruan Y."/>
            <person name="Salzberg S.L."/>
            <person name="Sandelin A."/>
            <person name="Schneider C."/>
            <person name="Schoenbach C."/>
            <person name="Sekiguchi K."/>
            <person name="Semple C.A."/>
            <person name="Seno S."/>
            <person name="Sessa L."/>
            <person name="Sheng Y."/>
            <person name="Shibata Y."/>
            <person name="Shimada H."/>
            <person name="Shimada K."/>
            <person name="Silva D."/>
            <person name="Sinclair B."/>
            <person name="Sperling S."/>
            <person name="Stupka E."/>
            <person name="Sugiura K."/>
            <person name="Sultana R."/>
            <person name="Takenaka Y."/>
            <person name="Taki K."/>
            <person name="Tammoja K."/>
            <person name="Tan S.L."/>
            <person name="Tang S."/>
            <person name="Taylor M.S."/>
            <person name="Tegner J."/>
            <person name="Teichmann S.A."/>
            <person name="Ueda H.R."/>
            <person name="van Nimwegen E."/>
            <person name="Verardo R."/>
            <person name="Wei C.L."/>
            <person name="Yagi K."/>
            <person name="Yamanishi H."/>
            <person name="Zabarovsky E."/>
            <person name="Zhu S."/>
            <person name="Zimmer A."/>
            <person name="Hide W."/>
            <person name="Bult C."/>
            <person name="Grimmond S.M."/>
            <person name="Teasdale R.D."/>
            <person name="Liu E.T."/>
            <person name="Brusic V."/>
            <person name="Quackenbush J."/>
            <person name="Wahlestedt C."/>
            <person name="Mattick J.S."/>
            <person name="Hume D.A."/>
            <person name="Kai C."/>
            <person name="Sasaki D."/>
            <person name="Tomaru Y."/>
            <person name="Fukuda S."/>
            <person name="Kanamori-Katayama M."/>
            <person name="Suzuki M."/>
            <person name="Aoki J."/>
            <person name="Arakawa T."/>
            <person name="Iida J."/>
            <person name="Imamura K."/>
            <person name="Itoh M."/>
            <person name="Kato T."/>
            <person name="Kawaji H."/>
            <person name="Kawagashira N."/>
            <person name="Kawashima T."/>
            <person name="Kojima M."/>
            <person name="Kondo S."/>
            <person name="Konno H."/>
            <person name="Nakano K."/>
            <person name="Ninomiya N."/>
            <person name="Nishio T."/>
            <person name="Okada M."/>
            <person name="Plessy C."/>
            <person name="Shibata K."/>
            <person name="Shiraki T."/>
            <person name="Suzuki S."/>
            <person name="Tagami M."/>
            <person name="Waki K."/>
            <person name="Watahiki A."/>
            <person name="Okamura-Oho Y."/>
            <person name="Suzuki H."/>
            <person name="Kawai J."/>
            <person name="Hayashizaki Y."/>
        </authorList>
    </citation>
    <scope>NUCLEOTIDE SEQUENCE [LARGE SCALE MRNA] OF 3666-4731</scope>
    <source>
        <strain>C57BL/6J</strain>
        <tissue>Testis</tissue>
    </source>
</reference>
<reference key="6">
    <citation type="journal article" date="2005" name="Dev. Biol.">
        <title>The mouse t complex distorter/sterility candidate, Dnahc8, expresses a gamma-type axonemal dynein heavy chain isoform confined to the principal piece of the sperm tail.</title>
        <authorList>
            <person name="Samant S.A."/>
            <person name="Ogunkua O.O."/>
            <person name="Hui L."/>
            <person name="Lu J."/>
            <person name="Han Y."/>
            <person name="Orth J.M."/>
            <person name="Pilder S.H."/>
        </authorList>
    </citation>
    <scope>SUBCELLULAR LOCATION</scope>
    <scope>TISSUE SPECIFICITY</scope>
</reference>
<reference key="7">
    <citation type="journal article" date="2010" name="Cell">
        <title>A tissue-specific atlas of mouse protein phosphorylation and expression.</title>
        <authorList>
            <person name="Huttlin E.L."/>
            <person name="Jedrychowski M.P."/>
            <person name="Elias J.E."/>
            <person name="Goswami T."/>
            <person name="Rad R."/>
            <person name="Beausoleil S.A."/>
            <person name="Villen J."/>
            <person name="Haas W."/>
            <person name="Sowa M.E."/>
            <person name="Gygi S.P."/>
        </authorList>
    </citation>
    <scope>IDENTIFICATION BY MASS SPECTROMETRY [LARGE SCALE ANALYSIS]</scope>
    <source>
        <tissue>Testis</tissue>
    </source>
</reference>
<reference key="8">
    <citation type="journal article" date="2020" name="Am. J. Hum. Genet.">
        <title>Bi-allelic DNAH8 Variants Lead to Multiple Morphological Abnormalities of the Sperm Flagella and Primary Male Infertility.</title>
        <authorList>
            <person name="Liu C."/>
            <person name="Miyata H."/>
            <person name="Gao Y."/>
            <person name="Sha Y."/>
            <person name="Tang S."/>
            <person name="Xu Z."/>
            <person name="Whitfield M."/>
            <person name="Patrat C."/>
            <person name="Wu H."/>
            <person name="Dulioust E."/>
            <person name="Tian S."/>
            <person name="Shimada K."/>
            <person name="Cong J."/>
            <person name="Noda T."/>
            <person name="Li H."/>
            <person name="Morohoshi A."/>
            <person name="Cazin C."/>
            <person name="Kherraf Z.E."/>
            <person name="Arnoult C."/>
            <person name="Jin L."/>
            <person name="He X."/>
            <person name="Ray P.F."/>
            <person name="Cao Y."/>
            <person name="Toure A."/>
            <person name="Zhang F."/>
            <person name="Ikawa M."/>
        </authorList>
    </citation>
    <scope>FUNCTION</scope>
    <scope>DISRUPTION PHENOTYPE</scope>
</reference>
<sequence>MESEEGNAEPPPPSEEAPPPVVEEAPPPLPPEDTAPPPPEEQAPPPEGDAAPPPTGDAFQLTVEGEAPHPEDPKLLSEQGPATSVTDYRSLIPSDEEVTLPEDEESGQARVRARHTPRPAQSVLSDGISQSSRRPSKFRRSMTGIPNLQETLKEKQARFREARENRKMKIGPSHKYIFEVLGEKLGLDLVTVEELILDCPSLDPFTSFFEKGGCKTLKFLYQEGEVPGFECGRTITGVPKGGKMMRIYVDNAAPDKLKGLCLFFVRCRNDVAINSKTIHEDVLFSFLDASKGLLEGIKHMLKSIFLPAILATSNWGALNQSKQGESEKHIFIETIHRYLASLDDATISIEGTVMLKKVDNIDFSKLHTFEEVTAAASSSEMVHQLEEVLMVWYKQIEQVLIESEQMRKEADDSGPLTELEHWKRMSAKFNFIIEQIKGSNCKAVINVLNVAHSKLLKNWRDLDARITDSANESKDNVRYLYTLEKVCQPLYNYDLVSMAHGIQNLINAIRMIHSVSRYYNTSERMTSLFIKVTNQMVTACKAYITDGGTNHVWDQETPAVLKKIQDCIFLFKEYQASFHKTRKQILESSGEKSFEVSEMYIFGKFEAFCKRLEKITEMITIVQTYSALSNSTIEGIDILGIKFKNIYQGIKKNQYDILDPRRTEFDTDFTEFMGKINILEIQIQAFMNSTFGKILSSQQALQLLQRFQKLNIPCLHLEINHTIERILQCYVAELEFTKKLYLSQKDDPPLARNMPPIAGKILWVRQLFRRINEPINYFFKNSDILSSTEGKAVIRQYNRIAYVLVEFEVAYHTAWFKEVSQLQYALQATLFVRHPETGKLLVNFDPKILEVVRETKCMIKMKLDVPEQAKNLLKLESKLKADKLYLQGLLQYYDDLCQEVPSVFVNLMTPKMKKVESVLRQGLTVLTWSSLMLESFFKEVESVLDMFNQLLKKVNDLCEMHIDTVLKEIAKTLLISLSDSGTTKVEDMLTLNETYTKECADILNHKSRHVEEAVKELILIFEQIYEVKYTGKAAKSVKEQRKRVVFGSEAEETEGLDFESTTMEVDTNDKEDEFKKECKEVYAFFSHQLLDSLQKATRLSLDTMKRRIFVGSQGRRRSEDIVSFIKTEVHLAIPNVVMVPSLDDIQQAINRMIQLTLEVSRGVAHWGQQQVRQIKSFQNNSRGSDQPPASGKPLKKEERSFEETIPARKLKNFYPGVAEHKDISKLVLLLSSSVNSLRKAATEALQDFQKYKTLWIEDRHVKVKEFLANNPSLTEIRSEILHYATLEQEIKELKPIIVVGSLELHTEPMKLALSIEAKAWKMLLCRYLNEEYKKKMSDMITFINEYLKKLSRPIRDLDDVRFAMEALSCIRDNEIQMDMTLGPIEEAYGILNRFEVKVTKEESEGVDTLRYSFNKLQSKAVSVQGELVKVQPKFKSNLLESVKVFCEDVINFTEAYETEGPMVPNIPPQEASNRLQIFQANFDDLWRKFVTYSSGEQLFGLPVTDYEVLHKTRKELNLLQKLYGLYDTVMGSISGYYEILWGDVDIEKINAELQEFQNRCRKLPRALKDWQAFLDLKKRIDDFSESCPLLEMMTNKAMKQRHWDRISELTGTPFDVESDTFCLRNIMEAPLLKNKDDIEDICISAIKEKDIEAKLTQVIENWTYQNLSFAAFKGKGELLLKGTESGEIITLMEDSLMVLGSLLSNRYNTPFKKNIQNWVFKLSTSSDIIEEWLIVQNLWVYLEAVFVGGDIAKQLPQEAKRFQNIDKSWIKIMQRAHENPNVISCCVGDETMGQLLPHLHEQLEVCQKSLTGYLEKKRLLFPRFFFVSDPVLLEILGQASDSHTIQPHLPAVSDNINEVTFHAKDYDRMTAVISREGEKIMLDTPVMAKGPVEIWLLDLLKVQMSSLHNIIRSAFYQISDSGFLLLPFLNHFPAQVGLLGIQMLWTHDSEEALNNAKDDRKIMQITNQKFLDILNTLISQTTHDLTKFDRVKFETLITIHVHQRDIFDDLVKMHIKSVTDFEWLKQSRFYFKEDLDQTVVSITDVDFIYQNEFLGCTDRLVITPLTDRCYITLAQALGMNMGGAPAGPAGTGKTETTKDMGRCLGKYVVVFNCSDQMDFRGLGRIFKGLAQSGSWGCFDEFNRIELPVLSVAAQQIYIVLTARKERKKQFIFSDGDCVDLNPEFGIFLTMNPGYAGRQELPENLKIQFRTVAMMVPDRQIIMRVKLASCGFLENVILAQKFYVLYKLCEEQLTKQVHYDFGLRNILSVLRTLGSQKRARPEDSELSTVMRGLRDMNLSKLVDEDEPLFLSLINDLFPGLQLDSSTYAELQSAVDNQVNLEGLINHPPWNLKLVQLYETSLVRHGLMTLGPSGSGKTTVITILMKSLTECGRPHREMRMNPKAITAPQMFGRLDTATNDWTDGIFSTLWRKTLKAKKGENIFLILDGPVDAIWIENLNSVLDDNKTLTLANGDRIPMAPTCKLLFEVHNIENASPATVSRMGMVYISSSALSWRPILQAWLKKRSQQEASVFLSLYDKVFEDAYTYMKLSLNPKMQLLECNYIMQSLNLLEGLIPSKEEGGVSSGDHLHKLFVFGLMWSLGALLELDSREKLEVFLRGHGSKLNLPEIPKGSQQTMYEFYVTDYGDWEHWNKRIQPYFYPTDSIPEYSSILVPNVDNIRTNFLIDTIAKQHKAVLLTGEQGTAKTVMVKAYLKKYDPEVQLSKSLNFSSATEPMMFQRTIESYVDKRMGSTYGPPGGRKMTVFIDDINMPVINEWGDQITNEIVRQMMEMEGMYSLDKPGDFTTIVDVQLIAAMIHPGGGRNDIPQRLKRQFTVFNCTLPSNTSIDKIFGIIGCGYFDPCRKFRPEICDMVGNLVSVSRVLWQWTKVKMLPTPSKFHYIFNLRDLSRIWQGMLTVKAEECSSIPILLSLFKHECNRVIADRFITPDDEQWFNSQLIRAVEENISPEVAANILPEPYFVDFLRDMPEPTGDEPEDTMFEVPKIYELVPSFEFLSEKLQFYQRQFNEIIRGTSLDLVFFKDAMTHLVKISRIIRTSCGNALLVGVGGSGKQSLSKLASFIAGYQIFQITLTRSYNVSNLIEDLKNLYKVAGAEGKGITFIFTDNEIKDEAFLEYLNNLLSSGEISNLFARDEMDEITQGLISVMKRELPRHPPTFDNLYEYFITRSRKNLHVVLCFSPVGEKFRARSLKFPGLISGCTMDWFSRWPKEALIAVASYFLLDYNIVCSIETKRHVVETMGLFHDMVSESCENYFQRYRRRAHVTPKSYLSFINGYKSIYTDKVKYINEQAERMNIGLDKLMEASESVAKLSQDLAVKEKELAVASIKADEVLAEVTVSAQASAKVKNEVQEVKDKAQKIVDEIDSEKVKAETKLEAAKPALEEAEAALNTIKPNDIATVRKLAKPPHLIMRIMDCVLLLFQKKIDPVTMDPEKPCCKPSWGESLKLMSATGFLFSLQQFPKDTINEETVELLQPYFNMDDYTFESAKKVCGNVAGLLSWTLAMVIFYGINREVLPLKANLAKQEGRLAVANVELGKAQALLDEKQAELDKVQAKFDAAMKEKMDLLNDADMCRKKMQAASTLIDGLSGEKVRWTQQSKEFKTQINRLVGDVLLCTGFLSYLGPFNQIFRNYLLKDQWELELKARKIPFTENLNLIAMLVDPPTIGEWGLQGLPGDDLSIQNGIIVTKATRYPLLIDPQTQGKTWIKSKEKENDLQVTSLNHKYFRTHLEDSLSLGRPLLIEDIREELDPALDNVLEKNFIKSGTAFKVKVGDKECDIMDTFKLYITTKLPNPAFTPEINAKTSVIDFTVTMKGLENQLLRRVILTEKQELESERVKLLEDVTFNKRKMKELEDNLLYKLSATKGSLVDDESLIGVLRITKQTAAEVSEKLHVAAETEIKINTAQEEFRPAATRGSILYFLITEMSMVNIMYQTSLAQFLKLFDQSMARSEKSPLPQKRITNIIEYLTYEVFTYSVRGLYENHKFLFVLLMTLKIDLQRGTVKHKEFQALIKGGAALDLKACPPKPFRWILDMTWLNLVELSKLPQFAEIMNQISRNEKGWKNWFDKDAPEEEIIPDGYNDSLDTCRKLLLIRSWCPDRTVFQARKYIADSLEEKYTEPVILNLEKTWEESDTHTPLICFLSMGSDPTIQIDALAKKLKLECRTISMGQGQEVHARKLIQLSMQQGGWVLLQNCHLGLEFMEELLEMLMVTETTEDSFRVWITTEPHDRFPITLLQTSIKFTNEPPQGVRAGLKRTFAGINQDLLDISNLPMWKPMLYTVAFLHSTVQERRKFGPLGWNIPYEFNSADFSASVQFIQNHLDECDIKKGVSWSTVRYMIGEVQYGGRVTDDFDKRLLNCFARVWFSEKMFEPSFCFYTGYKIPICKTLDQYFEFIQSLPSLDNPEVFGLHPNADITYQSNTASDVLETITNIQPKESGGGVGETREAIVYRLSEDMLSKLPPNYVPHEVKARLMKMGHLNSMNIFLRQEIDRMQKVISILRSSLSDLKLAIEGTIIMSENLRDALDNMYDARIPQLWKRVSWDSSTLGFWFTELLERNAQFSTWIFEGRPNVFWMTGFFNPQGFLTAMRQEVTRAHKGWALDTVTIHNEVLRQTKEEIITPPAEGVYIYGLYMDGASWDRRNGKLTESTPKVLFTQLPVLHIFAINSTAPKDPKLYVCPIYKKPRRTDLTFITVVYLRTVLSPDHWILRGVALLCDIK</sequence>
<keyword id="KW-0025">Alternative splicing</keyword>
<keyword id="KW-0067">ATP-binding</keyword>
<keyword id="KW-0966">Cell projection</keyword>
<keyword id="KW-0969">Cilium</keyword>
<keyword id="KW-0175">Coiled coil</keyword>
<keyword id="KW-0963">Cytoplasm</keyword>
<keyword id="KW-0206">Cytoskeleton</keyword>
<keyword id="KW-0243">Dynein</keyword>
<keyword id="KW-0282">Flagellum</keyword>
<keyword id="KW-0493">Microtubule</keyword>
<keyword id="KW-0505">Motor protein</keyword>
<keyword id="KW-0547">Nucleotide-binding</keyword>
<keyword id="KW-0597">Phosphoprotein</keyword>
<keyword id="KW-1185">Reference proteome</keyword>
<keyword id="KW-0677">Repeat</keyword>
<accession>Q91XQ0</accession>
<accession>E9Q010</accession>
<accession>O08830</accession>
<accession>Q3V0D2</accession>
<accession>Q91V63</accession>
<accession>Q91XP8</accession>
<accession>Q91XP9</accession>
<accession>Q99MH8</accession>
<accession>Q9QY72</accession>
<proteinExistence type="evidence at protein level"/>
<evidence type="ECO:0000250" key="1"/>
<evidence type="ECO:0000250" key="2">
    <source>
        <dbReference type="UniProtKB" id="Q96JB1"/>
    </source>
</evidence>
<evidence type="ECO:0000255" key="3"/>
<evidence type="ECO:0000256" key="4">
    <source>
        <dbReference type="SAM" id="MobiDB-lite"/>
    </source>
</evidence>
<evidence type="ECO:0000269" key="5">
    <source>
    </source>
</evidence>
<evidence type="ECO:0000269" key="6">
    <source>
    </source>
</evidence>
<evidence type="ECO:0000269" key="7">
    <source>
    </source>
</evidence>
<evidence type="ECO:0000269" key="8">
    <source>
    </source>
</evidence>
<evidence type="ECO:0000303" key="9">
    <source>
    </source>
</evidence>
<evidence type="ECO:0000305" key="10"/>
<feature type="chain" id="PRO_0000274045" description="Dynein axonemal heavy chain 8">
    <location>
        <begin position="1"/>
        <end position="4731"/>
    </location>
</feature>
<feature type="region of interest" description="Disordered" evidence="4">
    <location>
        <begin position="1"/>
        <end position="145"/>
    </location>
</feature>
<feature type="region of interest" description="Disordered" evidence="4">
    <location>
        <begin position="1177"/>
        <end position="1201"/>
    </location>
</feature>
<feature type="region of interest" description="AAA 1" evidence="1">
    <location>
        <begin position="2049"/>
        <end position="2271"/>
    </location>
</feature>
<feature type="region of interest" description="AAA 2" evidence="1">
    <location>
        <begin position="2331"/>
        <end position="2550"/>
    </location>
</feature>
<feature type="region of interest" description="AAA 3" evidence="1">
    <location>
        <begin position="2657"/>
        <end position="2910"/>
    </location>
</feature>
<feature type="region of interest" description="AAA 4" evidence="1">
    <location>
        <begin position="3021"/>
        <end position="3275"/>
    </location>
</feature>
<feature type="region of interest" description="Stalk" evidence="1">
    <location>
        <begin position="3290"/>
        <end position="3587"/>
    </location>
</feature>
<feature type="region of interest" description="AAA 5" evidence="1">
    <location>
        <begin position="3673"/>
        <end position="3903"/>
    </location>
</feature>
<feature type="region of interest" description="AAA 6" evidence="1">
    <location>
        <begin position="4118"/>
        <end position="4332"/>
    </location>
</feature>
<feature type="coiled-coil region" evidence="3">
    <location>
        <begin position="145"/>
        <end position="169"/>
    </location>
</feature>
<feature type="coiled-coil region" evidence="3">
    <location>
        <begin position="1543"/>
        <end position="1567"/>
    </location>
</feature>
<feature type="coiled-coil region" evidence="3">
    <location>
        <begin position="3313"/>
        <end position="3405"/>
    </location>
</feature>
<feature type="coiled-coil region" evidence="3">
    <location>
        <begin position="3531"/>
        <end position="3583"/>
    </location>
</feature>
<feature type="coiled-coil region" evidence="3">
    <location>
        <begin position="3836"/>
        <end position="3871"/>
    </location>
</feature>
<feature type="compositionally biased region" description="Pro residues" evidence="4">
    <location>
        <begin position="9"/>
        <end position="55"/>
    </location>
</feature>
<feature type="compositionally biased region" description="Basic and acidic residues" evidence="4">
    <location>
        <begin position="66"/>
        <end position="75"/>
    </location>
</feature>
<feature type="compositionally biased region" description="Acidic residues" evidence="4">
    <location>
        <begin position="94"/>
        <end position="106"/>
    </location>
</feature>
<feature type="compositionally biased region" description="Polar residues" evidence="4">
    <location>
        <begin position="122"/>
        <end position="133"/>
    </location>
</feature>
<feature type="binding site" evidence="3">
    <location>
        <begin position="2087"/>
        <end position="2094"/>
    </location>
    <ligand>
        <name>ATP</name>
        <dbReference type="ChEBI" id="CHEBI:30616"/>
    </ligand>
</feature>
<feature type="binding site" evidence="3">
    <location>
        <begin position="2369"/>
        <end position="2376"/>
    </location>
    <ligand>
        <name>ATP</name>
        <dbReference type="ChEBI" id="CHEBI:30616"/>
    </ligand>
</feature>
<feature type="modified residue" description="Phosphoserine" evidence="2">
    <location>
        <position position="917"/>
    </location>
</feature>
<feature type="splice variant" id="VSP_022616" description="In isoform 2." evidence="9">
    <original>GGW</original>
    <variation>VCN</variation>
    <location>
        <begin position="4200"/>
        <end position="4202"/>
    </location>
</feature>
<feature type="splice variant" id="VSP_022617" description="In isoform 2." evidence="9">
    <location>
        <begin position="4203"/>
        <end position="4731"/>
    </location>
</feature>
<feature type="sequence conflict" description="In Ref. 1; AAK60623/AAK60624/AAK60632." evidence="10" ref="1">
    <original>GI</original>
    <variation>RL</variation>
    <location>
        <begin position="127"/>
        <end position="128"/>
    </location>
</feature>
<feature type="sequence conflict" description="In Ref. 1; AAK60623/AAK60624/AAK60632." evidence="10" ref="1">
    <original>R</original>
    <variation>C</variation>
    <location>
        <position position="424"/>
    </location>
</feature>
<feature type="sequence conflict" description="In Ref. 1; AAK60621/AAK60622." evidence="10" ref="1">
    <original>C</original>
    <variation>R</variation>
    <location>
        <position position="567"/>
    </location>
</feature>
<feature type="sequence conflict" description="In Ref. 1; AAK60623/AAK60624/AAK60632." evidence="10" ref="1">
    <original>T</original>
    <variation>R</variation>
    <location>
        <position position="813"/>
    </location>
</feature>
<feature type="sequence conflict" description="In Ref. 1; AAK60623/AAK60624/AAK60632." evidence="10" ref="1">
    <original>D</original>
    <variation>N</variation>
    <location>
        <position position="963"/>
    </location>
</feature>
<feature type="sequence conflict" description="In Ref. 1; AAK60623/AAK60624/AAK60632." evidence="10" ref="1">
    <original>T</original>
    <variation>A</variation>
    <location>
        <position position="982"/>
    </location>
</feature>
<feature type="sequence conflict" description="In Ref. 1; AAK60623/AAK60624/AAK60632." evidence="10" ref="1">
    <original>E</original>
    <variation>K</variation>
    <location>
        <position position="1051"/>
    </location>
</feature>
<feature type="sequence conflict" description="In Ref. 1; AAK60623/AAK60624/AAK60632." evidence="10" ref="1">
    <original>K</original>
    <variation>E</variation>
    <location>
        <position position="1291"/>
    </location>
</feature>
<feature type="sequence conflict" description="In Ref. 1; AAK60623/AAK60624/AAK60632." evidence="10" ref="1">
    <original>V</original>
    <variation>I</variation>
    <location>
        <position position="1421"/>
    </location>
</feature>
<feature type="sequence conflict" description="In Ref. 1; AAK60621/AAK60622/AAK60623/AAK60624/AAK60632/AAK18309." evidence="10" ref="1">
    <original>K</original>
    <variation>Q</variation>
    <location>
        <position position="1429"/>
    </location>
</feature>
<feature type="sequence conflict" description="In Ref. 1; AAK60623/AAK60624/AAK60632." evidence="10" ref="1">
    <original>N</original>
    <variation>S</variation>
    <location>
        <position position="1437"/>
    </location>
</feature>
<feature type="sequence conflict" description="In Ref. 1; AAK60623/AAK60624/AAK60632." evidence="10" ref="1">
    <original>V</original>
    <variation>E</variation>
    <location>
        <position position="1463"/>
    </location>
</feature>
<feature type="sequence conflict" description="In Ref. 1; AAK60623/AAK60624/AAK60632." evidence="10" ref="1">
    <original>A</original>
    <variation>G</variation>
    <location>
        <position position="1566"/>
    </location>
</feature>
<feature type="sequence conflict" description="In Ref. 1; AAK60623/AAK60624/AAK60632." evidence="10" ref="1">
    <original>D</original>
    <variation>N</variation>
    <location>
        <position position="1569"/>
    </location>
</feature>
<feature type="sequence conflict" description="In Ref. 4; CAB06071." evidence="10" ref="4">
    <original>L</original>
    <variation>F</variation>
    <location>
        <position position="2060"/>
    </location>
</feature>
<feature type="sequence conflict" description="In Ref. 4; CAB06071." evidence="10" ref="4">
    <original>Y</original>
    <variation>N</variation>
    <location>
        <position position="2157"/>
    </location>
</feature>
<feature type="sequence conflict" description="In Ref. 4; CAB06071." evidence="10" ref="4">
    <original>K</original>
    <variation>R</variation>
    <location>
        <position position="2164"/>
    </location>
</feature>
<feature type="sequence conflict" description="In Ref. 4; CAB06071." evidence="10" ref="4">
    <original>K</original>
    <variation>T</variation>
    <location>
        <position position="2167"/>
    </location>
</feature>
<feature type="sequence conflict" description="In Ref. 1; AAK60623/AAK60624/AAK60632." evidence="10" ref="1">
    <original>V</original>
    <variation>A</variation>
    <location>
        <position position="2224"/>
    </location>
</feature>
<feature type="sequence conflict" description="In Ref. 4; CAB06071." evidence="10" ref="4">
    <original>N</original>
    <variation>A</variation>
    <location>
        <position position="2264"/>
    </location>
</feature>
<feature type="sequence conflict" description="In Ref. 1; AAK60623/AAK60624/AAK60632." evidence="10" ref="1">
    <original>P</original>
    <variation>T</variation>
    <location>
        <position position="3408"/>
    </location>
</feature>
<feature type="sequence conflict" description="In Ref. 1; AAK60623/AAK60624/AAK60632." evidence="10" ref="1">
    <original>I</original>
    <variation>V</variation>
    <location>
        <position position="3893"/>
    </location>
</feature>
<feature type="sequence conflict" description="In Ref. 1; AAK60623." evidence="10" ref="1">
    <original>E</original>
    <variation>K</variation>
    <location>
        <position position="4229"/>
    </location>
</feature>
<feature type="sequence conflict" description="In Ref. 5; BAE21572." evidence="10" ref="5">
    <original>L</original>
    <variation>W</variation>
    <location>
        <position position="4310"/>
    </location>
</feature>
<comment type="function">
    <text evidence="5 6 8">Force generating protein component of the outer dynein arms (ODAs) in the sperm flagellum. Produces force towards the minus ends of microtubules. Dynein has ATPase activity; the force-producing power stroke is thought to occur on release of ADP. Involved in sperm motility; implicated in sperm flagellar assembly.</text>
</comment>
<comment type="subunit">
    <text>Consists of at least two heavy chains and a number of intermediate and light chains.</text>
</comment>
<comment type="subcellular location">
    <subcellularLocation>
        <location evidence="7">Cytoplasm</location>
        <location evidence="7">Cytoskeleton</location>
        <location evidence="7">Flagellum axoneme</location>
    </subcellularLocation>
    <subcellularLocation>
        <location evidence="7">Cytoplasm</location>
    </subcellularLocation>
    <text evidence="7">Detected in sperm tail, with almost exclusive localization to the principal piece. Also detected in the cytoplasm of primary spermatocytes.</text>
</comment>
<comment type="alternative products">
    <event type="alternative splicing"/>
    <isoform>
        <id>Q91XQ0-1</id>
        <name>1</name>
        <sequence type="displayed"/>
    </isoform>
    <isoform>
        <id>Q91XQ0-2</id>
        <name>2</name>
        <sequence type="described" ref="VSP_022616 VSP_022617"/>
    </isoform>
</comment>
<comment type="tissue specificity">
    <text evidence="5 6 7">Isoform 1 and/or isoform 2 are expressed in spermatocytes and mature sperm (at protein level). Testis-specific. Accumulates exclusively in mid to late spermatocytes.</text>
</comment>
<comment type="domain">
    <text>Dynein heavy chains probably consist of an N-terminal stem (which binds cargo and interacts with other dynein components), and the head or motor domain. The motor contains six tandemly-linked AAA domains in the head, which form a ring. A stalk-like structure (formed by two of the coiled coil domains) protrudes between AAA 4 and AAA 5 and terminates in a microtubule-binding site. A seventh domain may also contribute to this ring; it is not clear whether the N-terminus or the C-terminus forms this extra domain. There are four well-conserved and two non-conserved ATPase sites, one per AAA domain. Probably only one of these (within AAA 1) actually hydrolyzes ATP, the others may serve a regulatory function.</text>
</comment>
<comment type="disruption phenotype">
    <text evidence="8">Homozygous knockout male mice are sterile due to diminished sperm movement (PubMed:32619401). Sperm flagella show disorganized microtubules and outer dense fibers resulting in significantly higher rates of abnormal flagella (PubMed:32619401).</text>
</comment>
<comment type="miscellaneous">
    <molecule>Isoform 2</molecule>
    <text evidence="10">May be due to an intron retention.</text>
</comment>
<comment type="similarity">
    <text evidence="10">Belongs to the dynein heavy chain family.</text>
</comment>
<comment type="sequence caution" evidence="10">
    <conflict type="erroneous initiation">
        <sequence resource="EMBL-CDS" id="BAE21572"/>
    </conflict>
    <text>Truncated N-terminus.</text>
</comment>
<dbReference type="EMBL" id="AF356520">
    <property type="protein sequence ID" value="AAK60621.1"/>
    <property type="molecule type" value="mRNA"/>
</dbReference>
<dbReference type="EMBL" id="AF356521">
    <property type="protein sequence ID" value="AAK60622.1"/>
    <property type="molecule type" value="mRNA"/>
</dbReference>
<dbReference type="EMBL" id="AF356522">
    <property type="protein sequence ID" value="AAK60623.1"/>
    <property type="molecule type" value="mRNA"/>
</dbReference>
<dbReference type="EMBL" id="AF356523">
    <property type="protein sequence ID" value="AAK60624.1"/>
    <property type="molecule type" value="mRNA"/>
</dbReference>
<dbReference type="EMBL" id="AF363577">
    <property type="protein sequence ID" value="AAK60632.1"/>
    <property type="molecule type" value="mRNA"/>
</dbReference>
<dbReference type="EMBL" id="AF342999">
    <property type="protein sequence ID" value="AAK18309.1"/>
    <property type="molecule type" value="Genomic_DNA"/>
</dbReference>
<dbReference type="EMBL" id="AC165951">
    <property type="status" value="NOT_ANNOTATED_CDS"/>
    <property type="molecule type" value="Genomic_DNA"/>
</dbReference>
<dbReference type="EMBL" id="AC165962">
    <property type="status" value="NOT_ANNOTATED_CDS"/>
    <property type="molecule type" value="Genomic_DNA"/>
</dbReference>
<dbReference type="EMBL" id="AC166166">
    <property type="status" value="NOT_ANNOTATED_CDS"/>
    <property type="molecule type" value="Genomic_DNA"/>
</dbReference>
<dbReference type="EMBL" id="AC174471">
    <property type="status" value="NOT_ANNOTATED_CDS"/>
    <property type="molecule type" value="Genomic_DNA"/>
</dbReference>
<dbReference type="EMBL" id="AF117305">
    <property type="protein sequence ID" value="AAF20213.1"/>
    <property type="molecule type" value="mRNA"/>
</dbReference>
<dbReference type="EMBL" id="Z83817">
    <property type="protein sequence ID" value="CAB06071.1"/>
    <property type="molecule type" value="mRNA"/>
</dbReference>
<dbReference type="EMBL" id="AK133238">
    <property type="protein sequence ID" value="BAE21572.1"/>
    <property type="status" value="ALT_INIT"/>
    <property type="molecule type" value="mRNA"/>
</dbReference>
<dbReference type="CCDS" id="CCDS37541.1">
    <molecule id="Q91XQ0-1"/>
</dbReference>
<dbReference type="RefSeq" id="NP_038839.2">
    <molecule id="Q91XQ0-1"/>
    <property type="nucleotide sequence ID" value="NM_013811.4"/>
</dbReference>
<dbReference type="RefSeq" id="XP_006523651.1">
    <property type="nucleotide sequence ID" value="XM_006523588.2"/>
</dbReference>
<dbReference type="SMR" id="Q91XQ0"/>
<dbReference type="FunCoup" id="Q91XQ0">
    <property type="interactions" value="80"/>
</dbReference>
<dbReference type="IntAct" id="Q91XQ0">
    <property type="interactions" value="1"/>
</dbReference>
<dbReference type="MINT" id="Q91XQ0"/>
<dbReference type="STRING" id="10090.ENSMUSP00000157469"/>
<dbReference type="GlyGen" id="Q91XQ0">
    <property type="glycosylation" value="1 site"/>
</dbReference>
<dbReference type="iPTMnet" id="Q91XQ0"/>
<dbReference type="PhosphoSitePlus" id="Q91XQ0"/>
<dbReference type="SwissPalm" id="Q91XQ0"/>
<dbReference type="jPOST" id="Q91XQ0"/>
<dbReference type="PaxDb" id="10090-ENSMUSP00000127878"/>
<dbReference type="ProteomicsDB" id="277696">
    <molecule id="Q91XQ0-1"/>
</dbReference>
<dbReference type="ProteomicsDB" id="277697">
    <molecule id="Q91XQ0-2"/>
</dbReference>
<dbReference type="Antibodypedia" id="29878">
    <property type="antibodies" value="48 antibodies from 16 providers"/>
</dbReference>
<dbReference type="DNASU" id="13417"/>
<dbReference type="Ensembl" id="ENSMUST00000170651.2">
    <molecule id="Q91XQ0-1"/>
    <property type="protein sequence ID" value="ENSMUSP00000127878.2"/>
    <property type="gene ID" value="ENSMUSG00000033826.11"/>
</dbReference>
<dbReference type="Ensembl" id="ENSMUST00000235390.2">
    <molecule id="Q91XQ0-1"/>
    <property type="protein sequence ID" value="ENSMUSP00000158051.2"/>
    <property type="gene ID" value="ENSMUSG00000033826.11"/>
</dbReference>
<dbReference type="Ensembl" id="ENSMUST00000236140.2">
    <molecule id="Q91XQ0-1"/>
    <property type="protein sequence ID" value="ENSMUSP00000157469.2"/>
    <property type="gene ID" value="ENSMUSG00000033826.11"/>
</dbReference>
<dbReference type="GeneID" id="13417"/>
<dbReference type="KEGG" id="mmu:13417"/>
<dbReference type="UCSC" id="uc008bua.1">
    <molecule id="Q91XQ0-2"/>
    <property type="organism name" value="mouse"/>
</dbReference>
<dbReference type="UCSC" id="uc008bub.1">
    <molecule id="Q91XQ0-1"/>
    <property type="organism name" value="mouse"/>
</dbReference>
<dbReference type="AGR" id="MGI:107714"/>
<dbReference type="CTD" id="1769"/>
<dbReference type="MGI" id="MGI:107714">
    <property type="gene designation" value="Dnah8"/>
</dbReference>
<dbReference type="VEuPathDB" id="HostDB:ENSMUSG00000033826"/>
<dbReference type="eggNOG" id="KOG3595">
    <property type="taxonomic scope" value="Eukaryota"/>
</dbReference>
<dbReference type="GeneTree" id="ENSGT00940000158992"/>
<dbReference type="HOGENOM" id="CLU_000038_9_1_1"/>
<dbReference type="InParanoid" id="Q91XQ0"/>
<dbReference type="OMA" id="ATEPIMF"/>
<dbReference type="OrthoDB" id="447173at2759"/>
<dbReference type="PhylomeDB" id="Q91XQ0"/>
<dbReference type="TreeFam" id="TF316836"/>
<dbReference type="BioGRID-ORCS" id="13417">
    <property type="hits" value="3 hits in 79 CRISPR screens"/>
</dbReference>
<dbReference type="ChiTaRS" id="Dnah8">
    <property type="organism name" value="mouse"/>
</dbReference>
<dbReference type="PRO" id="PR:Q91XQ0"/>
<dbReference type="Proteomes" id="UP000000589">
    <property type="component" value="Chromosome 17"/>
</dbReference>
<dbReference type="RNAct" id="Q91XQ0">
    <property type="molecule type" value="protein"/>
</dbReference>
<dbReference type="Bgee" id="ENSMUSG00000033826">
    <property type="expression patterns" value="Expressed in spermatocyte and 88 other cell types or tissues"/>
</dbReference>
<dbReference type="ExpressionAtlas" id="Q91XQ0">
    <property type="expression patterns" value="baseline and differential"/>
</dbReference>
<dbReference type="GO" id="GO:0005930">
    <property type="term" value="C:axoneme"/>
    <property type="evidence" value="ECO:0000250"/>
    <property type="project" value="UniProtKB"/>
</dbReference>
<dbReference type="GO" id="GO:0005874">
    <property type="term" value="C:microtubule"/>
    <property type="evidence" value="ECO:0007669"/>
    <property type="project" value="UniProtKB-KW"/>
</dbReference>
<dbReference type="GO" id="GO:0036157">
    <property type="term" value="C:outer dynein arm"/>
    <property type="evidence" value="ECO:0000255"/>
    <property type="project" value="MGI"/>
</dbReference>
<dbReference type="GO" id="GO:0036126">
    <property type="term" value="C:sperm flagellum"/>
    <property type="evidence" value="ECO:0000250"/>
    <property type="project" value="UniProtKB"/>
</dbReference>
<dbReference type="GO" id="GO:0097228">
    <property type="term" value="C:sperm principal piece"/>
    <property type="evidence" value="ECO:0000314"/>
    <property type="project" value="MGI"/>
</dbReference>
<dbReference type="GO" id="GO:0005524">
    <property type="term" value="F:ATP binding"/>
    <property type="evidence" value="ECO:0007669"/>
    <property type="project" value="UniProtKB-KW"/>
</dbReference>
<dbReference type="GO" id="GO:0016887">
    <property type="term" value="F:ATP hydrolysis activity"/>
    <property type="evidence" value="ECO:0007669"/>
    <property type="project" value="InterPro"/>
</dbReference>
<dbReference type="GO" id="GO:0045505">
    <property type="term" value="F:dynein intermediate chain binding"/>
    <property type="evidence" value="ECO:0007669"/>
    <property type="project" value="InterPro"/>
</dbReference>
<dbReference type="GO" id="GO:0051959">
    <property type="term" value="F:dynein light intermediate chain binding"/>
    <property type="evidence" value="ECO:0007669"/>
    <property type="project" value="InterPro"/>
</dbReference>
<dbReference type="GO" id="GO:0003777">
    <property type="term" value="F:microtubule motor activity"/>
    <property type="evidence" value="ECO:0000250"/>
    <property type="project" value="UniProtKB"/>
</dbReference>
<dbReference type="GO" id="GO:0008569">
    <property type="term" value="F:minus-end-directed microtubule motor activity"/>
    <property type="evidence" value="ECO:0007669"/>
    <property type="project" value="InterPro"/>
</dbReference>
<dbReference type="GO" id="GO:0007018">
    <property type="term" value="P:microtubule-based movement"/>
    <property type="evidence" value="ECO:0007669"/>
    <property type="project" value="InterPro"/>
</dbReference>
<dbReference type="FunFam" id="3.40.50.300:FF:001221">
    <property type="entry name" value="Axonemal dynein heavy chain 8"/>
    <property type="match status" value="1"/>
</dbReference>
<dbReference type="FunFam" id="1.10.8.1220:FF:000001">
    <property type="entry name" value="Dynein axonemal heavy chain 5"/>
    <property type="match status" value="1"/>
</dbReference>
<dbReference type="FunFam" id="1.10.8.710:FF:000003">
    <property type="entry name" value="Dynein axonemal heavy chain 5"/>
    <property type="match status" value="1"/>
</dbReference>
<dbReference type="FunFam" id="1.20.58.1120:FF:000004">
    <property type="entry name" value="Dynein axonemal heavy chain 5"/>
    <property type="match status" value="1"/>
</dbReference>
<dbReference type="FunFam" id="1.20.920.20:FF:000004">
    <property type="entry name" value="Dynein axonemal heavy chain 5"/>
    <property type="match status" value="1"/>
</dbReference>
<dbReference type="FunFam" id="1.20.920.30:FF:000004">
    <property type="entry name" value="Dynein axonemal heavy chain 5"/>
    <property type="match status" value="1"/>
</dbReference>
<dbReference type="FunFam" id="3.20.180.20:FF:000001">
    <property type="entry name" value="Dynein axonemal heavy chain 5"/>
    <property type="match status" value="1"/>
</dbReference>
<dbReference type="FunFam" id="3.40.50.300:FF:000543">
    <property type="entry name" value="Dynein axonemal heavy chain 5"/>
    <property type="match status" value="1"/>
</dbReference>
<dbReference type="FunFam" id="3.40.50.300:FF:002141">
    <property type="entry name" value="Dynein heavy chain"/>
    <property type="match status" value="1"/>
</dbReference>
<dbReference type="FunFam" id="1.10.472.130:FF:000009">
    <property type="entry name" value="Dynein heavy chain 5, axonemal"/>
    <property type="match status" value="1"/>
</dbReference>
<dbReference type="FunFam" id="1.10.8.720:FF:000004">
    <property type="entry name" value="Dynein heavy chain 5, axonemal"/>
    <property type="match status" value="1"/>
</dbReference>
<dbReference type="FunFam" id="1.20.1270.280:FF:000002">
    <property type="entry name" value="Dynein heavy chain 5, axonemal"/>
    <property type="match status" value="1"/>
</dbReference>
<dbReference type="FunFam" id="3.10.490.20:FF:000003">
    <property type="entry name" value="Dynein heavy chain 5, axonemal"/>
    <property type="match status" value="1"/>
</dbReference>
<dbReference type="FunFam" id="3.40.50.300:FF:000044">
    <property type="entry name" value="Dynein heavy chain 5, axonemal"/>
    <property type="match status" value="1"/>
</dbReference>
<dbReference type="FunFam" id="1.10.287.2620:FF:000003">
    <property type="entry name" value="Dynein, axonemal, heavy chain 5"/>
    <property type="match status" value="1"/>
</dbReference>
<dbReference type="FunFam" id="1.20.140.100:FF:000003">
    <property type="entry name" value="Dynein, axonemal, heavy chain 5"/>
    <property type="match status" value="1"/>
</dbReference>
<dbReference type="FunFam" id="3.40.50.300:FF:000049">
    <property type="entry name" value="Dynein, axonemal, heavy chain 5"/>
    <property type="match status" value="1"/>
</dbReference>
<dbReference type="FunFam" id="3.40.50.300:FF:000320">
    <property type="entry name" value="Dynein, axonemal, heavy chain 5"/>
    <property type="match status" value="1"/>
</dbReference>
<dbReference type="Gene3D" id="1.10.287.2620">
    <property type="match status" value="1"/>
</dbReference>
<dbReference type="Gene3D" id="1.10.472.130">
    <property type="match status" value="1"/>
</dbReference>
<dbReference type="Gene3D" id="1.10.8.1220">
    <property type="match status" value="1"/>
</dbReference>
<dbReference type="Gene3D" id="1.10.8.710">
    <property type="match status" value="1"/>
</dbReference>
<dbReference type="Gene3D" id="1.20.1270.280">
    <property type="match status" value="1"/>
</dbReference>
<dbReference type="Gene3D" id="1.20.58.1120">
    <property type="match status" value="1"/>
</dbReference>
<dbReference type="Gene3D" id="1.20.920.20">
    <property type="match status" value="1"/>
</dbReference>
<dbReference type="Gene3D" id="1.20.920.30">
    <property type="match status" value="1"/>
</dbReference>
<dbReference type="Gene3D" id="3.10.490.20">
    <property type="match status" value="1"/>
</dbReference>
<dbReference type="Gene3D" id="6.10.140.1060">
    <property type="match status" value="1"/>
</dbReference>
<dbReference type="Gene3D" id="1.20.140.100">
    <property type="entry name" value="Dynein heavy chain, N-terminal domain 2"/>
    <property type="match status" value="1"/>
</dbReference>
<dbReference type="Gene3D" id="3.20.180.20">
    <property type="entry name" value="Dynein heavy chain, N-terminal domain 2"/>
    <property type="match status" value="1"/>
</dbReference>
<dbReference type="Gene3D" id="3.40.50.300">
    <property type="entry name" value="P-loop containing nucleotide triphosphate hydrolases"/>
    <property type="match status" value="5"/>
</dbReference>
<dbReference type="Gene3D" id="1.10.8.720">
    <property type="entry name" value="Region D6 of dynein motor"/>
    <property type="match status" value="1"/>
</dbReference>
<dbReference type="InterPro" id="IPR003593">
    <property type="entry name" value="AAA+_ATPase"/>
</dbReference>
<dbReference type="InterPro" id="IPR035699">
    <property type="entry name" value="AAA_6"/>
</dbReference>
<dbReference type="InterPro" id="IPR035706">
    <property type="entry name" value="AAA_9"/>
</dbReference>
<dbReference type="InterPro" id="IPR041658">
    <property type="entry name" value="AAA_lid_11"/>
</dbReference>
<dbReference type="InterPro" id="IPR042219">
    <property type="entry name" value="AAA_lid_11_sf"/>
</dbReference>
<dbReference type="InterPro" id="IPR026983">
    <property type="entry name" value="DHC"/>
</dbReference>
<dbReference type="InterPro" id="IPR041589">
    <property type="entry name" value="DNAH3_AAA_lid_1"/>
</dbReference>
<dbReference type="InterPro" id="IPR056759">
    <property type="entry name" value="DYH2-5-8_CC"/>
</dbReference>
<dbReference type="InterPro" id="IPR042222">
    <property type="entry name" value="Dynein_2_N"/>
</dbReference>
<dbReference type="InterPro" id="IPR043157">
    <property type="entry name" value="Dynein_AAA1S"/>
</dbReference>
<dbReference type="InterPro" id="IPR041466">
    <property type="entry name" value="Dynein_AAA5_ext"/>
</dbReference>
<dbReference type="InterPro" id="IPR041228">
    <property type="entry name" value="Dynein_C"/>
</dbReference>
<dbReference type="InterPro" id="IPR043160">
    <property type="entry name" value="Dynein_C_barrel"/>
</dbReference>
<dbReference type="InterPro" id="IPR024743">
    <property type="entry name" value="Dynein_HC_stalk"/>
</dbReference>
<dbReference type="InterPro" id="IPR024317">
    <property type="entry name" value="Dynein_heavy_chain_D4_dom"/>
</dbReference>
<dbReference type="InterPro" id="IPR004273">
    <property type="entry name" value="Dynein_heavy_D6_P-loop"/>
</dbReference>
<dbReference type="InterPro" id="IPR013602">
    <property type="entry name" value="Dynein_heavy_linker"/>
</dbReference>
<dbReference type="InterPro" id="IPR013594">
    <property type="entry name" value="Dynein_heavy_tail"/>
</dbReference>
<dbReference type="InterPro" id="IPR042228">
    <property type="entry name" value="Dynein_linker_3"/>
</dbReference>
<dbReference type="InterPro" id="IPR027417">
    <property type="entry name" value="P-loop_NTPase"/>
</dbReference>
<dbReference type="PANTHER" id="PTHR46532:SF11">
    <property type="entry name" value="DYNEIN AXONEMAL HEAVY CHAIN 12"/>
    <property type="match status" value="1"/>
</dbReference>
<dbReference type="PANTHER" id="PTHR46532">
    <property type="entry name" value="MALE FERTILITY FACTOR KL5"/>
    <property type="match status" value="1"/>
</dbReference>
<dbReference type="Pfam" id="PF12774">
    <property type="entry name" value="AAA_6"/>
    <property type="match status" value="1"/>
</dbReference>
<dbReference type="Pfam" id="PF12775">
    <property type="entry name" value="AAA_7"/>
    <property type="match status" value="1"/>
</dbReference>
<dbReference type="Pfam" id="PF12780">
    <property type="entry name" value="AAA_8"/>
    <property type="match status" value="1"/>
</dbReference>
<dbReference type="Pfam" id="PF12781">
    <property type="entry name" value="AAA_9"/>
    <property type="match status" value="1"/>
</dbReference>
<dbReference type="Pfam" id="PF17857">
    <property type="entry name" value="AAA_lid_1"/>
    <property type="match status" value="1"/>
</dbReference>
<dbReference type="Pfam" id="PF18198">
    <property type="entry name" value="AAA_lid_11"/>
    <property type="match status" value="1"/>
</dbReference>
<dbReference type="Pfam" id="PF08385">
    <property type="entry name" value="DHC_N1"/>
    <property type="match status" value="1"/>
</dbReference>
<dbReference type="Pfam" id="PF08393">
    <property type="entry name" value="DHC_N2"/>
    <property type="match status" value="1"/>
</dbReference>
<dbReference type="Pfam" id="PF25007">
    <property type="entry name" value="DYH2-5-8_CC"/>
    <property type="match status" value="1"/>
</dbReference>
<dbReference type="Pfam" id="PF17852">
    <property type="entry name" value="Dynein_AAA_lid"/>
    <property type="match status" value="1"/>
</dbReference>
<dbReference type="Pfam" id="PF18199">
    <property type="entry name" value="Dynein_C"/>
    <property type="match status" value="1"/>
</dbReference>
<dbReference type="Pfam" id="PF03028">
    <property type="entry name" value="Dynein_heavy"/>
    <property type="match status" value="1"/>
</dbReference>
<dbReference type="Pfam" id="PF12777">
    <property type="entry name" value="MT"/>
    <property type="match status" value="1"/>
</dbReference>
<dbReference type="SMART" id="SM00382">
    <property type="entry name" value="AAA"/>
    <property type="match status" value="3"/>
</dbReference>
<dbReference type="SUPFAM" id="SSF52540">
    <property type="entry name" value="P-loop containing nucleoside triphosphate hydrolases"/>
    <property type="match status" value="4"/>
</dbReference>
<protein>
    <recommendedName>
        <fullName>Dynein axonemal heavy chain 8</fullName>
    </recommendedName>
    <alternativeName>
        <fullName>Axonemal beta dynein heavy chain 8</fullName>
    </alternativeName>
    <alternativeName>
        <fullName>Ciliary dynein heavy chain 8</fullName>
    </alternativeName>
</protein>